<reference key="1">
    <citation type="journal article" date="2011" name="Genome Biol.">
        <title>Comparative and functional genomics provide insights into the pathogenicity of dermatophytic fungi.</title>
        <authorList>
            <person name="Burmester A."/>
            <person name="Shelest E."/>
            <person name="Gloeckner G."/>
            <person name="Heddergott C."/>
            <person name="Schindler S."/>
            <person name="Staib P."/>
            <person name="Heidel A."/>
            <person name="Felder M."/>
            <person name="Petzold A."/>
            <person name="Szafranski K."/>
            <person name="Feuermann M."/>
            <person name="Pedruzzi I."/>
            <person name="Priebe S."/>
            <person name="Groth M."/>
            <person name="Winkler R."/>
            <person name="Li W."/>
            <person name="Kniemeyer O."/>
            <person name="Schroeckh V."/>
            <person name="Hertweck C."/>
            <person name="Hube B."/>
            <person name="White T.C."/>
            <person name="Platzer M."/>
            <person name="Guthke R."/>
            <person name="Heitman J."/>
            <person name="Woestemeyer J."/>
            <person name="Zipfel P.F."/>
            <person name="Monod M."/>
            <person name="Brakhage A.A."/>
        </authorList>
    </citation>
    <scope>NUCLEOTIDE SEQUENCE [LARGE SCALE GENOMIC DNA]</scope>
    <source>
        <strain evidence="6">ATCC MYA-4681 / CBS 112371</strain>
    </source>
</reference>
<evidence type="ECO:0000250" key="1">
    <source>
        <dbReference type="UniProtKB" id="P00655"/>
    </source>
</evidence>
<evidence type="ECO:0000250" key="2">
    <source>
        <dbReference type="UniProtKB" id="P67875"/>
    </source>
</evidence>
<evidence type="ECO:0000255" key="3"/>
<evidence type="ECO:0000256" key="4">
    <source>
        <dbReference type="SAM" id="MobiDB-lite"/>
    </source>
</evidence>
<evidence type="ECO:0000305" key="5"/>
<evidence type="ECO:0000312" key="6">
    <source>
        <dbReference type="Proteomes" id="UP000008866"/>
    </source>
</evidence>
<organism>
    <name type="scientific">Arthroderma benhamiae (strain ATCC MYA-4681 / CBS 112371)</name>
    <name type="common">Trichophyton mentagrophytes</name>
    <dbReference type="NCBI Taxonomy" id="663331"/>
    <lineage>
        <taxon>Eukaryota</taxon>
        <taxon>Fungi</taxon>
        <taxon>Dikarya</taxon>
        <taxon>Ascomycota</taxon>
        <taxon>Pezizomycotina</taxon>
        <taxon>Eurotiomycetes</taxon>
        <taxon>Eurotiomycetidae</taxon>
        <taxon>Onygenales</taxon>
        <taxon>Arthrodermataceae</taxon>
        <taxon>Trichophyton</taxon>
    </lineage>
</organism>
<keyword id="KW-0020">Allergen</keyword>
<keyword id="KW-0378">Hydrolase</keyword>
<keyword id="KW-0540">Nuclease</keyword>
<keyword id="KW-1185">Reference proteome</keyword>
<keyword id="KW-0964">Secreted</keyword>
<keyword id="KW-0732">Signal</keyword>
<name>RNAS_ARTBC</name>
<accession>D4AS55</accession>
<protein>
    <recommendedName>
        <fullName evidence="5">Ribonuclease ARB_07070</fullName>
        <ecNumber evidence="1">3.1.27.-</ecNumber>
    </recommendedName>
    <alternativeName>
        <fullName evidence="5">Major allergen Asp f 1 homolog</fullName>
    </alternativeName>
</protein>
<comment type="function">
    <text evidence="2">This purine-specific ribonuclease cleaves 28S RNA in eukaryotic ribosomes, inhibits protein synthesis, and shows antitumor activity.</text>
</comment>
<comment type="subcellular location">
    <subcellularLocation>
        <location evidence="2">Secreted</location>
    </subcellularLocation>
</comment>
<comment type="allergen">
    <text evidence="5">May cause an allergic reaction in human.</text>
</comment>
<comment type="similarity">
    <text evidence="5">Belongs to the ribonuclease U2 family.</text>
</comment>
<feature type="signal peptide" evidence="3">
    <location>
        <begin position="1"/>
        <end position="18"/>
    </location>
</feature>
<feature type="chain" id="PRO_0000434428" description="Ribonuclease ARB_07070" evidence="3">
    <location>
        <begin position="19"/>
        <end position="160"/>
    </location>
</feature>
<feature type="region of interest" description="Disordered" evidence="4">
    <location>
        <begin position="26"/>
        <end position="51"/>
    </location>
</feature>
<feature type="active site" description="Proton acceptor" evidence="1">
    <location>
        <position position="103"/>
    </location>
</feature>
<feature type="active site" description="Proton donor" evidence="1">
    <location>
        <position position="144"/>
    </location>
</feature>
<sequence>MVSFKAILTLSLIGAAFATPIEQRAAEPVEDSGAVANSPEGSGMDLGGTDPTADAIEERGLLVRNILRQLLNNKQSGLTIISSTSNAITWLSRPPRRGRSLREYPVFQQHHKVYNYNSRPKENPGPFRLIATKDSRHFCGIISHDGIGHNPNAGLFHLCK</sequence>
<gene>
    <name type="ORF">ARB_07070</name>
</gene>
<proteinExistence type="inferred from homology"/>
<dbReference type="EC" id="3.1.27.-" evidence="1"/>
<dbReference type="EMBL" id="ABSU01000007">
    <property type="protein sequence ID" value="EFE34119.1"/>
    <property type="molecule type" value="Genomic_DNA"/>
</dbReference>
<dbReference type="RefSeq" id="XP_003014508.1">
    <property type="nucleotide sequence ID" value="XM_003014462.1"/>
</dbReference>
<dbReference type="SMR" id="D4AS55"/>
<dbReference type="GeneID" id="9520560"/>
<dbReference type="KEGG" id="abe:ARB_07070"/>
<dbReference type="eggNOG" id="ENOG502SV0S">
    <property type="taxonomic scope" value="Eukaryota"/>
</dbReference>
<dbReference type="HOGENOM" id="CLU_106852_0_0_1"/>
<dbReference type="Proteomes" id="UP000008866">
    <property type="component" value="Unassembled WGS sequence"/>
</dbReference>
<dbReference type="GO" id="GO:0005576">
    <property type="term" value="C:extracellular region"/>
    <property type="evidence" value="ECO:0007669"/>
    <property type="project" value="UniProtKB-SubCell"/>
</dbReference>
<dbReference type="GO" id="GO:0003723">
    <property type="term" value="F:RNA binding"/>
    <property type="evidence" value="ECO:0007669"/>
    <property type="project" value="InterPro"/>
</dbReference>
<dbReference type="GO" id="GO:0004540">
    <property type="term" value="F:RNA nuclease activity"/>
    <property type="evidence" value="ECO:0007669"/>
    <property type="project" value="InterPro"/>
</dbReference>
<dbReference type="Gene3D" id="3.10.450.30">
    <property type="entry name" value="Microbial ribonucleases"/>
    <property type="match status" value="1"/>
</dbReference>
<dbReference type="InterPro" id="IPR016191">
    <property type="entry name" value="Ribonuclease/ribotoxin"/>
</dbReference>
<dbReference type="InterPro" id="IPR048269">
    <property type="entry name" value="RNase_U2"/>
</dbReference>
<dbReference type="PIRSF" id="PIRSF037430">
    <property type="entry name" value="RNase_U2"/>
    <property type="match status" value="1"/>
</dbReference>
<dbReference type="SUPFAM" id="SSF53933">
    <property type="entry name" value="Microbial ribonucleases"/>
    <property type="match status" value="1"/>
</dbReference>